<organism>
    <name type="scientific">Salmonella paratyphi C (strain RKS4594)</name>
    <dbReference type="NCBI Taxonomy" id="476213"/>
    <lineage>
        <taxon>Bacteria</taxon>
        <taxon>Pseudomonadati</taxon>
        <taxon>Pseudomonadota</taxon>
        <taxon>Gammaproteobacteria</taxon>
        <taxon>Enterobacterales</taxon>
        <taxon>Enterobacteriaceae</taxon>
        <taxon>Salmonella</taxon>
    </lineage>
</organism>
<gene>
    <name evidence="1" type="primary">yeaH</name>
    <name type="ordered locus">SPC_2457</name>
</gene>
<reference key="1">
    <citation type="journal article" date="2009" name="PLoS ONE">
        <title>Salmonella paratyphi C: genetic divergence from Salmonella choleraesuis and pathogenic convergence with Salmonella typhi.</title>
        <authorList>
            <person name="Liu W.-Q."/>
            <person name="Feng Y."/>
            <person name="Wang Y."/>
            <person name="Zou Q.-H."/>
            <person name="Chen F."/>
            <person name="Guo J.-T."/>
            <person name="Peng Y.-H."/>
            <person name="Jin Y."/>
            <person name="Li Y.-G."/>
            <person name="Hu S.-N."/>
            <person name="Johnston R.N."/>
            <person name="Liu G.-R."/>
            <person name="Liu S.-L."/>
        </authorList>
    </citation>
    <scope>NUCLEOTIDE SEQUENCE [LARGE SCALE GENOMIC DNA]</scope>
    <source>
        <strain>RKS4594</strain>
    </source>
</reference>
<comment type="similarity">
    <text evidence="1">Belongs to the UPF0229 family.</text>
</comment>
<feature type="chain" id="PRO_1000164983" description="UPF0229 protein YeaH">
    <location>
        <begin position="1"/>
        <end position="428"/>
    </location>
</feature>
<feature type="region of interest" description="Disordered" evidence="2">
    <location>
        <begin position="78"/>
        <end position="111"/>
    </location>
</feature>
<feature type="compositionally biased region" description="Basic and acidic residues" evidence="2">
    <location>
        <begin position="78"/>
        <end position="90"/>
    </location>
</feature>
<feature type="compositionally biased region" description="Gly residues" evidence="2">
    <location>
        <begin position="92"/>
        <end position="103"/>
    </location>
</feature>
<evidence type="ECO:0000255" key="1">
    <source>
        <dbReference type="HAMAP-Rule" id="MF_01232"/>
    </source>
</evidence>
<evidence type="ECO:0000256" key="2">
    <source>
        <dbReference type="SAM" id="MobiDB-lite"/>
    </source>
</evidence>
<sequence length="428" mass="49543">MTWFIDRRLNGKNKSTVNRQRFLRRYKAQIKQSISEAINKRSVTDVDSGESVSIPTDDISEPMFHQGRGGLRHRVHPGNDHFIQNDRIERPQGGGGGGSGSGQGQASQDGEGQDEFVFQISKDEYLDLLFEDLALPNLKKNQHRQLNEYKTHRAGFTSNGVPANISVVRSLQNSLARRTAMTAGKRRELHALETELETISHSEPAQLLEEERLRREIAELRAKIERVPFIDTFDLRYKNYEKRPEPSSQAVMFCLMDVSGSMDQATKDMAKRFYILLYLFLSRTYKNVEVVYIRHHTQAKEVDEHEFFYSQETGGTIVSSALKLMDEVVKERYDPGQWNIYAAQASDGDNWADDSPLCHEILAKKLLPVVRYYSYIEITRRAHQTLWREYEHLQAKFDNFAMQHIRDQEDIYPVFRELFQKQSANQSA</sequence>
<protein>
    <recommendedName>
        <fullName evidence="1">UPF0229 protein YeaH</fullName>
    </recommendedName>
</protein>
<accession>C0Q708</accession>
<name>YEAH_SALPC</name>
<proteinExistence type="inferred from homology"/>
<dbReference type="EMBL" id="CP000857">
    <property type="protein sequence ID" value="ACN46566.1"/>
    <property type="molecule type" value="Genomic_DNA"/>
</dbReference>
<dbReference type="RefSeq" id="WP_000219712.1">
    <property type="nucleotide sequence ID" value="NC_012125.1"/>
</dbReference>
<dbReference type="SMR" id="C0Q708"/>
<dbReference type="KEGG" id="sei:SPC_2457"/>
<dbReference type="HOGENOM" id="CLU_049702_0_0_6"/>
<dbReference type="Proteomes" id="UP000001599">
    <property type="component" value="Chromosome"/>
</dbReference>
<dbReference type="HAMAP" id="MF_01232">
    <property type="entry name" value="UPF0229"/>
    <property type="match status" value="1"/>
</dbReference>
<dbReference type="InterPro" id="IPR006698">
    <property type="entry name" value="UPF0229"/>
</dbReference>
<dbReference type="NCBIfam" id="NF003707">
    <property type="entry name" value="PRK05325.1-2"/>
    <property type="match status" value="1"/>
</dbReference>
<dbReference type="NCBIfam" id="NF003708">
    <property type="entry name" value="PRK05325.1-3"/>
    <property type="match status" value="1"/>
</dbReference>
<dbReference type="PANTHER" id="PTHR30510">
    <property type="entry name" value="UPF0229 PROTEIN YEAH"/>
    <property type="match status" value="1"/>
</dbReference>
<dbReference type="PANTHER" id="PTHR30510:SF2">
    <property type="entry name" value="UPF0229 PROTEIN YEAH"/>
    <property type="match status" value="1"/>
</dbReference>
<dbReference type="Pfam" id="PF04285">
    <property type="entry name" value="DUF444"/>
    <property type="match status" value="1"/>
</dbReference>